<name>S2538_SCLS1</name>
<comment type="function">
    <text evidence="2">Mitochondrial glycine transporter that imports glycine into the mitochondrial matrix. Plays an important role in providing glycine for the first enzymatic step in heme biosynthesis, the condensation of glycine with succinyl-CoA to produce 5-aminolevulinate (ALA) in the mitochondrial matrix.</text>
</comment>
<comment type="catalytic activity">
    <reaction evidence="1">
        <text>glycine(in) = glycine(out)</text>
        <dbReference type="Rhea" id="RHEA:70715"/>
        <dbReference type="ChEBI" id="CHEBI:57305"/>
    </reaction>
</comment>
<comment type="subcellular location">
    <subcellularLocation>
        <location evidence="2">Mitochondrion inner membrane</location>
        <topology evidence="2">Multi-pass membrane protein</topology>
    </subcellularLocation>
</comment>
<comment type="similarity">
    <text evidence="2">Belongs to the mitochondrial carrier (TC 2.A.29) family. SLC25A38 subfamily.</text>
</comment>
<accession>A7F9Y3</accession>
<sequence length="330" mass="35626">MSNGGNAGKKSSSYFHFTAGLGSGILSAVLLQPADLLKTRLQQSNHASLLTTIRELSQSPNTIRSFWRGTVPSALRTGFGSAIYFTSLNALRQNVARSNLLRTIGVVDAKNGPVHSSSLPKLSNLANLTTGAVARAGAGFVLMPMTIIKVRYESNLYAYKSIMGAGRDIFLTEGFRGFFSGFGATAIRDAPYAGLYVLFYEQLKKRLSHIVHSVPQAEELVENLGVRKNMKGSTSASINFGSGVLAAGLATAITNPFDAIKTRIQLQPKKYTNLVMAGRKMVGEEGVKSLFDGLGLRMGRKAVSSALAWTIYEELIRRAELAWKGEEVIV</sequence>
<organism>
    <name type="scientific">Sclerotinia sclerotiorum (strain ATCC 18683 / 1980 / Ss-1)</name>
    <name type="common">White mold</name>
    <name type="synonym">Whetzelinia sclerotiorum</name>
    <dbReference type="NCBI Taxonomy" id="665079"/>
    <lineage>
        <taxon>Eukaryota</taxon>
        <taxon>Fungi</taxon>
        <taxon>Dikarya</taxon>
        <taxon>Ascomycota</taxon>
        <taxon>Pezizomycotina</taxon>
        <taxon>Leotiomycetes</taxon>
        <taxon>Helotiales</taxon>
        <taxon>Sclerotiniaceae</taxon>
        <taxon>Sclerotinia</taxon>
    </lineage>
</organism>
<feature type="chain" id="PRO_0000378944" description="Mitochondrial glycine transporter">
    <location>
        <begin position="1"/>
        <end position="330"/>
    </location>
</feature>
<feature type="transmembrane region" description="Helical; Name=1" evidence="2">
    <location>
        <begin position="17"/>
        <end position="42"/>
    </location>
</feature>
<feature type="transmembrane region" description="Helical; Name=2" evidence="2">
    <location>
        <begin position="69"/>
        <end position="95"/>
    </location>
</feature>
<feature type="transmembrane region" description="Helical; Name=3" evidence="2">
    <location>
        <begin position="128"/>
        <end position="153"/>
    </location>
</feature>
<feature type="transmembrane region" description="Helical; Name=4" evidence="2">
    <location>
        <begin position="181"/>
        <end position="204"/>
    </location>
</feature>
<feature type="transmembrane region" description="Helical; Name=5" evidence="2">
    <location>
        <begin position="238"/>
        <end position="264"/>
    </location>
</feature>
<feature type="transmembrane region" description="Helical; Name=6" evidence="2">
    <location>
        <begin position="293"/>
        <end position="311"/>
    </location>
</feature>
<feature type="repeat" description="Solcar 1" evidence="2">
    <location>
        <begin position="11"/>
        <end position="94"/>
    </location>
</feature>
<feature type="repeat" description="Solcar 2" evidence="2">
    <location>
        <begin position="122"/>
        <end position="206"/>
    </location>
</feature>
<feature type="repeat" description="Solcar 3" evidence="2">
    <location>
        <begin position="234"/>
        <end position="318"/>
    </location>
</feature>
<proteinExistence type="inferred from homology"/>
<keyword id="KW-0472">Membrane</keyword>
<keyword id="KW-0496">Mitochondrion</keyword>
<keyword id="KW-0999">Mitochondrion inner membrane</keyword>
<keyword id="KW-1185">Reference proteome</keyword>
<keyword id="KW-0677">Repeat</keyword>
<keyword id="KW-0812">Transmembrane</keyword>
<keyword id="KW-1133">Transmembrane helix</keyword>
<keyword id="KW-0813">Transport</keyword>
<protein>
    <recommendedName>
        <fullName evidence="2">Mitochondrial glycine transporter</fullName>
    </recommendedName>
    <alternativeName>
        <fullName evidence="2">Solute carrier family 25 member 38 homolog</fullName>
    </alternativeName>
</protein>
<evidence type="ECO:0000250" key="1">
    <source>
        <dbReference type="UniProtKB" id="Q96DW6"/>
    </source>
</evidence>
<evidence type="ECO:0000255" key="2">
    <source>
        <dbReference type="HAMAP-Rule" id="MF_03064"/>
    </source>
</evidence>
<reference key="1">
    <citation type="journal article" date="2011" name="PLoS Genet.">
        <title>Genomic analysis of the necrotrophic fungal pathogens Sclerotinia sclerotiorum and Botrytis cinerea.</title>
        <authorList>
            <person name="Amselem J."/>
            <person name="Cuomo C.A."/>
            <person name="van Kan J.A.L."/>
            <person name="Viaud M."/>
            <person name="Benito E.P."/>
            <person name="Couloux A."/>
            <person name="Coutinho P.M."/>
            <person name="de Vries R.P."/>
            <person name="Dyer P.S."/>
            <person name="Fillinger S."/>
            <person name="Fournier E."/>
            <person name="Gout L."/>
            <person name="Hahn M."/>
            <person name="Kohn L."/>
            <person name="Lapalu N."/>
            <person name="Plummer K.M."/>
            <person name="Pradier J.-M."/>
            <person name="Quevillon E."/>
            <person name="Sharon A."/>
            <person name="Simon A."/>
            <person name="ten Have A."/>
            <person name="Tudzynski B."/>
            <person name="Tudzynski P."/>
            <person name="Wincker P."/>
            <person name="Andrew M."/>
            <person name="Anthouard V."/>
            <person name="Beever R.E."/>
            <person name="Beffa R."/>
            <person name="Benoit I."/>
            <person name="Bouzid O."/>
            <person name="Brault B."/>
            <person name="Chen Z."/>
            <person name="Choquer M."/>
            <person name="Collemare J."/>
            <person name="Cotton P."/>
            <person name="Danchin E.G."/>
            <person name="Da Silva C."/>
            <person name="Gautier A."/>
            <person name="Giraud C."/>
            <person name="Giraud T."/>
            <person name="Gonzalez C."/>
            <person name="Grossetete S."/>
            <person name="Gueldener U."/>
            <person name="Henrissat B."/>
            <person name="Howlett B.J."/>
            <person name="Kodira C."/>
            <person name="Kretschmer M."/>
            <person name="Lappartient A."/>
            <person name="Leroch M."/>
            <person name="Levis C."/>
            <person name="Mauceli E."/>
            <person name="Neuveglise C."/>
            <person name="Oeser B."/>
            <person name="Pearson M."/>
            <person name="Poulain J."/>
            <person name="Poussereau N."/>
            <person name="Quesneville H."/>
            <person name="Rascle C."/>
            <person name="Schumacher J."/>
            <person name="Segurens B."/>
            <person name="Sexton A."/>
            <person name="Silva E."/>
            <person name="Sirven C."/>
            <person name="Soanes D.M."/>
            <person name="Talbot N.J."/>
            <person name="Templeton M."/>
            <person name="Yandava C."/>
            <person name="Yarden O."/>
            <person name="Zeng Q."/>
            <person name="Rollins J.A."/>
            <person name="Lebrun M.-H."/>
            <person name="Dickman M."/>
        </authorList>
    </citation>
    <scope>NUCLEOTIDE SEQUENCE [LARGE SCALE GENOMIC DNA]</scope>
    <source>
        <strain>ATCC 18683 / 1980 / Ss-1</strain>
    </source>
</reference>
<gene>
    <name type="ORF">SS1G_14414</name>
</gene>
<dbReference type="EMBL" id="CH476653">
    <property type="protein sequence ID" value="EDO00544.1"/>
    <property type="molecule type" value="Genomic_DNA"/>
</dbReference>
<dbReference type="RefSeq" id="XP_001584645.1">
    <property type="nucleotide sequence ID" value="XM_001584595.1"/>
</dbReference>
<dbReference type="SMR" id="A7F9Y3"/>
<dbReference type="FunCoup" id="A7F9Y3">
    <property type="interactions" value="96"/>
</dbReference>
<dbReference type="STRING" id="665079.A7F9Y3"/>
<dbReference type="EnsemblFungi" id="EDO00544">
    <property type="protein sequence ID" value="EDO00544"/>
    <property type="gene ID" value="SS1G_14414"/>
</dbReference>
<dbReference type="GeneID" id="5480721"/>
<dbReference type="KEGG" id="ssl:SS1G_14414"/>
<dbReference type="VEuPathDB" id="FungiDB:sscle_13g096740"/>
<dbReference type="eggNOG" id="KOG0766">
    <property type="taxonomic scope" value="Eukaryota"/>
</dbReference>
<dbReference type="HOGENOM" id="CLU_015166_0_3_1"/>
<dbReference type="InParanoid" id="A7F9Y3"/>
<dbReference type="OMA" id="WGIYEEL"/>
<dbReference type="OrthoDB" id="1924968at2759"/>
<dbReference type="Proteomes" id="UP000001312">
    <property type="component" value="Unassembled WGS sequence"/>
</dbReference>
<dbReference type="GO" id="GO:0005743">
    <property type="term" value="C:mitochondrial inner membrane"/>
    <property type="evidence" value="ECO:0007669"/>
    <property type="project" value="UniProtKB-SubCell"/>
</dbReference>
<dbReference type="GO" id="GO:0005739">
    <property type="term" value="C:mitochondrion"/>
    <property type="evidence" value="ECO:0000318"/>
    <property type="project" value="GO_Central"/>
</dbReference>
<dbReference type="GO" id="GO:0015187">
    <property type="term" value="F:glycine transmembrane transporter activity"/>
    <property type="evidence" value="ECO:0000318"/>
    <property type="project" value="GO_Central"/>
</dbReference>
<dbReference type="GO" id="GO:1904983">
    <property type="term" value="P:glycine import into mitochondrion"/>
    <property type="evidence" value="ECO:0000318"/>
    <property type="project" value="GO_Central"/>
</dbReference>
<dbReference type="GO" id="GO:0006783">
    <property type="term" value="P:heme biosynthetic process"/>
    <property type="evidence" value="ECO:0007669"/>
    <property type="project" value="EnsemblFungi"/>
</dbReference>
<dbReference type="FunFam" id="1.50.40.10:FF:000144">
    <property type="entry name" value="Mitochondrial glycine transporter"/>
    <property type="match status" value="1"/>
</dbReference>
<dbReference type="FunFam" id="1.50.40.10:FF:000173">
    <property type="entry name" value="Mitochondrial glycine transporter"/>
    <property type="match status" value="1"/>
</dbReference>
<dbReference type="Gene3D" id="1.50.40.10">
    <property type="entry name" value="Mitochondrial carrier domain"/>
    <property type="match status" value="2"/>
</dbReference>
<dbReference type="HAMAP" id="MF_03064">
    <property type="entry name" value="SLC25A38"/>
    <property type="match status" value="1"/>
</dbReference>
<dbReference type="InterPro" id="IPR030847">
    <property type="entry name" value="Hem25/SLC25A38"/>
</dbReference>
<dbReference type="InterPro" id="IPR018108">
    <property type="entry name" value="Mitochondrial_sb/sol_carrier"/>
</dbReference>
<dbReference type="InterPro" id="IPR023395">
    <property type="entry name" value="Mt_carrier_dom_sf"/>
</dbReference>
<dbReference type="PANTHER" id="PTHR46181">
    <property type="entry name" value="MITOCHONDRIAL GLYCINE TRANSPORTER"/>
    <property type="match status" value="1"/>
</dbReference>
<dbReference type="PANTHER" id="PTHR46181:SF3">
    <property type="entry name" value="MITOCHONDRIAL GLYCINE TRANSPORTER"/>
    <property type="match status" value="1"/>
</dbReference>
<dbReference type="Pfam" id="PF00153">
    <property type="entry name" value="Mito_carr"/>
    <property type="match status" value="3"/>
</dbReference>
<dbReference type="SUPFAM" id="SSF103506">
    <property type="entry name" value="Mitochondrial carrier"/>
    <property type="match status" value="1"/>
</dbReference>
<dbReference type="PROSITE" id="PS50920">
    <property type="entry name" value="SOLCAR"/>
    <property type="match status" value="3"/>
</dbReference>